<reference key="1">
    <citation type="submission" date="2007-10" db="EMBL/GenBank/DDBJ databases">
        <title>Complete sequence of Caldivirga maquilingensis IC-167.</title>
        <authorList>
            <consortium name="US DOE Joint Genome Institute"/>
            <person name="Copeland A."/>
            <person name="Lucas S."/>
            <person name="Lapidus A."/>
            <person name="Barry K."/>
            <person name="Glavina del Rio T."/>
            <person name="Dalin E."/>
            <person name="Tice H."/>
            <person name="Pitluck S."/>
            <person name="Saunders E."/>
            <person name="Brettin T."/>
            <person name="Bruce D."/>
            <person name="Detter J.C."/>
            <person name="Han C."/>
            <person name="Schmutz J."/>
            <person name="Larimer F."/>
            <person name="Land M."/>
            <person name="Hauser L."/>
            <person name="Kyrpides N."/>
            <person name="Ivanova N."/>
            <person name="Biddle J.F."/>
            <person name="Zhang Z."/>
            <person name="Fitz-Gibbon S.T."/>
            <person name="Lowe T.M."/>
            <person name="Saltikov C."/>
            <person name="House C.H."/>
            <person name="Richardson P."/>
        </authorList>
    </citation>
    <scope>NUCLEOTIDE SEQUENCE [LARGE SCALE GENOMIC DNA]</scope>
    <source>
        <strain>ATCC 700844 / DSM 13496 / JCM 10307 / IC-167</strain>
    </source>
</reference>
<evidence type="ECO:0000255" key="1">
    <source>
        <dbReference type="HAMAP-Rule" id="MF_00087"/>
    </source>
</evidence>
<accession>A8MAH6</accession>
<gene>
    <name evidence="1" type="primary">hemA</name>
    <name type="ordered locus">Cmaq_1730</name>
</gene>
<comment type="function">
    <text evidence="1">Catalyzes the NADPH-dependent reduction of glutamyl-tRNA(Glu) to glutamate 1-semialdehyde (GSA).</text>
</comment>
<comment type="catalytic activity">
    <reaction evidence="1">
        <text>(S)-4-amino-5-oxopentanoate + tRNA(Glu) + NADP(+) = L-glutamyl-tRNA(Glu) + NADPH + H(+)</text>
        <dbReference type="Rhea" id="RHEA:12344"/>
        <dbReference type="Rhea" id="RHEA-COMP:9663"/>
        <dbReference type="Rhea" id="RHEA-COMP:9680"/>
        <dbReference type="ChEBI" id="CHEBI:15378"/>
        <dbReference type="ChEBI" id="CHEBI:57501"/>
        <dbReference type="ChEBI" id="CHEBI:57783"/>
        <dbReference type="ChEBI" id="CHEBI:58349"/>
        <dbReference type="ChEBI" id="CHEBI:78442"/>
        <dbReference type="ChEBI" id="CHEBI:78520"/>
        <dbReference type="EC" id="1.2.1.70"/>
    </reaction>
</comment>
<comment type="pathway">
    <text evidence="1">Porphyrin-containing compound metabolism; protoporphyrin-IX biosynthesis; 5-aminolevulinate from L-glutamyl-tRNA(Glu): step 1/2.</text>
</comment>
<comment type="subunit">
    <text evidence="1">Homodimer.</text>
</comment>
<comment type="domain">
    <text evidence="1">Possesses an unusual extended V-shaped dimeric structure with each monomer consisting of three distinct domains arranged along a curved 'spinal' alpha-helix. The N-terminal catalytic domain specifically recognizes the glutamate moiety of the substrate. The second domain is the NADPH-binding domain, and the third C-terminal domain is responsible for dimerization.</text>
</comment>
<comment type="miscellaneous">
    <text evidence="1">During catalysis, the active site Cys acts as a nucleophile attacking the alpha-carbonyl group of tRNA-bound glutamate with the formation of a thioester intermediate between enzyme and glutamate, and the concomitant release of tRNA(Glu). The thioester intermediate is finally reduced by direct hydride transfer from NADPH, to form the product GSA.</text>
</comment>
<comment type="similarity">
    <text evidence="1">Belongs to the glutamyl-tRNA reductase family.</text>
</comment>
<name>HEM1_CALMQ</name>
<sequence length="406" mass="45009">MGIDDYLSKIRALTLNHKRVSTITLSETYFNRDEVYGKLMNYYDEVFLLQTCNRVEVYVYGDDDSVAEDMYKVKGTINHVDKLVGMNAVRHIFRVAAGLESAAVGESEILGQVEDAFNDARKRGALGGLLGFTIERAIRTGKEIRSRFPEISIGLASIGSLVAEYVHRVRGLNSRIAVIGAGSIGSDIVRRLAEKGFRNVIIVNRTLDKAKAAALRYGFNYAPIDSLRSVIRDSDVVIFATSATNPLLRRRDAEELSGKPIIIDVGVPRNVDPEIPGVVSIDELKNIENEIREGKRKALDEASRLIELRLIEYRRLFARRVIEGMIGELTKWGLSIGESEVKRAVKAGLIKNEEDGAALAVKSTVKKIMLPLLTYLKELAEEDKFDEALIIISGIKAKLNGDGKQS</sequence>
<protein>
    <recommendedName>
        <fullName evidence="1">Glutamyl-tRNA reductase</fullName>
        <shortName evidence="1">GluTR</shortName>
        <ecNumber evidence="1">1.2.1.70</ecNumber>
    </recommendedName>
</protein>
<organism>
    <name type="scientific">Caldivirga maquilingensis (strain ATCC 700844 / DSM 13496 / JCM 10307 / IC-167)</name>
    <dbReference type="NCBI Taxonomy" id="397948"/>
    <lineage>
        <taxon>Archaea</taxon>
        <taxon>Thermoproteota</taxon>
        <taxon>Thermoprotei</taxon>
        <taxon>Thermoproteales</taxon>
        <taxon>Thermoproteaceae</taxon>
        <taxon>Caldivirga</taxon>
    </lineage>
</organism>
<dbReference type="EC" id="1.2.1.70" evidence="1"/>
<dbReference type="EMBL" id="CP000852">
    <property type="protein sequence ID" value="ABW02553.1"/>
    <property type="molecule type" value="Genomic_DNA"/>
</dbReference>
<dbReference type="RefSeq" id="WP_012186772.1">
    <property type="nucleotide sequence ID" value="NC_009954.1"/>
</dbReference>
<dbReference type="SMR" id="A8MAH6"/>
<dbReference type="STRING" id="397948.Cmaq_1730"/>
<dbReference type="GeneID" id="5710155"/>
<dbReference type="KEGG" id="cma:Cmaq_1730"/>
<dbReference type="eggNOG" id="arCOG01036">
    <property type="taxonomic scope" value="Archaea"/>
</dbReference>
<dbReference type="HOGENOM" id="CLU_035113_0_0_2"/>
<dbReference type="OrthoDB" id="4562at2157"/>
<dbReference type="UniPathway" id="UPA00251">
    <property type="reaction ID" value="UER00316"/>
</dbReference>
<dbReference type="Proteomes" id="UP000001137">
    <property type="component" value="Chromosome"/>
</dbReference>
<dbReference type="GO" id="GO:0008883">
    <property type="term" value="F:glutamyl-tRNA reductase activity"/>
    <property type="evidence" value="ECO:0007669"/>
    <property type="project" value="UniProtKB-UniRule"/>
</dbReference>
<dbReference type="GO" id="GO:0050661">
    <property type="term" value="F:NADP binding"/>
    <property type="evidence" value="ECO:0007669"/>
    <property type="project" value="InterPro"/>
</dbReference>
<dbReference type="GO" id="GO:0019353">
    <property type="term" value="P:protoporphyrinogen IX biosynthetic process from glutamate"/>
    <property type="evidence" value="ECO:0007669"/>
    <property type="project" value="TreeGrafter"/>
</dbReference>
<dbReference type="Gene3D" id="3.30.460.30">
    <property type="entry name" value="Glutamyl-tRNA reductase, N-terminal domain"/>
    <property type="match status" value="1"/>
</dbReference>
<dbReference type="Gene3D" id="3.40.50.720">
    <property type="entry name" value="NAD(P)-binding Rossmann-like Domain"/>
    <property type="match status" value="1"/>
</dbReference>
<dbReference type="HAMAP" id="MF_00087">
    <property type="entry name" value="Glu_tRNA_reductase"/>
    <property type="match status" value="1"/>
</dbReference>
<dbReference type="InterPro" id="IPR000343">
    <property type="entry name" value="4pyrrol_synth_GluRdtase"/>
</dbReference>
<dbReference type="InterPro" id="IPR015896">
    <property type="entry name" value="4pyrrol_synth_GluRdtase_dimer"/>
</dbReference>
<dbReference type="InterPro" id="IPR015895">
    <property type="entry name" value="4pyrrol_synth_GluRdtase_N"/>
</dbReference>
<dbReference type="InterPro" id="IPR018214">
    <property type="entry name" value="GluRdtase_CS"/>
</dbReference>
<dbReference type="InterPro" id="IPR036343">
    <property type="entry name" value="GluRdtase_N_sf"/>
</dbReference>
<dbReference type="InterPro" id="IPR036291">
    <property type="entry name" value="NAD(P)-bd_dom_sf"/>
</dbReference>
<dbReference type="InterPro" id="IPR006151">
    <property type="entry name" value="Shikm_DH/Glu-tRNA_Rdtase"/>
</dbReference>
<dbReference type="PANTHER" id="PTHR43013">
    <property type="entry name" value="GLUTAMYL-TRNA REDUCTASE"/>
    <property type="match status" value="1"/>
</dbReference>
<dbReference type="PANTHER" id="PTHR43013:SF1">
    <property type="entry name" value="GLUTAMYL-TRNA REDUCTASE"/>
    <property type="match status" value="1"/>
</dbReference>
<dbReference type="Pfam" id="PF00745">
    <property type="entry name" value="GlutR_dimer"/>
    <property type="match status" value="1"/>
</dbReference>
<dbReference type="Pfam" id="PF05201">
    <property type="entry name" value="GlutR_N"/>
    <property type="match status" value="1"/>
</dbReference>
<dbReference type="Pfam" id="PF01488">
    <property type="entry name" value="Shikimate_DH"/>
    <property type="match status" value="1"/>
</dbReference>
<dbReference type="PIRSF" id="PIRSF000445">
    <property type="entry name" value="4pyrrol_synth_GluRdtase"/>
    <property type="match status" value="1"/>
</dbReference>
<dbReference type="SUPFAM" id="SSF69742">
    <property type="entry name" value="Glutamyl tRNA-reductase catalytic, N-terminal domain"/>
    <property type="match status" value="1"/>
</dbReference>
<dbReference type="SUPFAM" id="SSF51735">
    <property type="entry name" value="NAD(P)-binding Rossmann-fold domains"/>
    <property type="match status" value="1"/>
</dbReference>
<dbReference type="PROSITE" id="PS00747">
    <property type="entry name" value="GLUTR"/>
    <property type="match status" value="1"/>
</dbReference>
<proteinExistence type="inferred from homology"/>
<keyword id="KW-0521">NADP</keyword>
<keyword id="KW-0560">Oxidoreductase</keyword>
<keyword id="KW-0627">Porphyrin biosynthesis</keyword>
<keyword id="KW-1185">Reference proteome</keyword>
<feature type="chain" id="PRO_0000335085" description="Glutamyl-tRNA reductase">
    <location>
        <begin position="1"/>
        <end position="406"/>
    </location>
</feature>
<feature type="active site" description="Nucleophile" evidence="1">
    <location>
        <position position="52"/>
    </location>
</feature>
<feature type="binding site" evidence="1">
    <location>
        <begin position="51"/>
        <end position="54"/>
    </location>
    <ligand>
        <name>substrate</name>
    </ligand>
</feature>
<feature type="binding site" evidence="1">
    <location>
        <position position="101"/>
    </location>
    <ligand>
        <name>substrate</name>
    </ligand>
</feature>
<feature type="binding site" evidence="1">
    <location>
        <begin position="106"/>
        <end position="108"/>
    </location>
    <ligand>
        <name>substrate</name>
    </ligand>
</feature>
<feature type="binding site" evidence="1">
    <location>
        <position position="112"/>
    </location>
    <ligand>
        <name>substrate</name>
    </ligand>
</feature>
<feature type="binding site" evidence="1">
    <location>
        <begin position="180"/>
        <end position="185"/>
    </location>
    <ligand>
        <name>NADP(+)</name>
        <dbReference type="ChEBI" id="CHEBI:58349"/>
    </ligand>
</feature>
<feature type="site" description="Important for activity" evidence="1">
    <location>
        <position position="91"/>
    </location>
</feature>